<organism>
    <name type="scientific">Vanderwaltozyma polyspora (strain ATCC 22028 / DSM 70294 / BCRC 21397 / CBS 2163 / NBRC 10782 / NRRL Y-8283 / UCD 57-17)</name>
    <name type="common">Kluyveromyces polysporus</name>
    <dbReference type="NCBI Taxonomy" id="436907"/>
    <lineage>
        <taxon>Eukaryota</taxon>
        <taxon>Fungi</taxon>
        <taxon>Dikarya</taxon>
        <taxon>Ascomycota</taxon>
        <taxon>Saccharomycotina</taxon>
        <taxon>Saccharomycetes</taxon>
        <taxon>Saccharomycetales</taxon>
        <taxon>Saccharomycetaceae</taxon>
        <taxon>Vanderwaltozyma</taxon>
    </lineage>
</organism>
<accession>A7TSL2</accession>
<comment type="function">
    <text evidence="1">Cleaves proteins, imported into the mitochondrion, to their mature size. While most mitochondrial precursor proteins are processed to the mature form in one step by mitochondrial processing peptidase (MPP), the sequential cleavage by MIP of an octapeptide after initial processing by MPP is a required step for a subgroup of nuclear-encoded precursor proteins destined for the matrix or the inner membrane (By similarity).</text>
</comment>
<comment type="catalytic activity">
    <reaction>
        <text>Release of an N-terminal octapeptide as second stage of processing of some proteins imported into the mitochondrion.</text>
        <dbReference type="EC" id="3.4.24.59"/>
    </reaction>
</comment>
<comment type="cofactor">
    <cofactor evidence="1">
        <name>Zn(2+)</name>
        <dbReference type="ChEBI" id="CHEBI:29105"/>
    </cofactor>
    <text evidence="1">Binds 1 zinc ion.</text>
</comment>
<comment type="subcellular location">
    <subcellularLocation>
        <location evidence="1">Mitochondrion matrix</location>
    </subcellularLocation>
</comment>
<comment type="similarity">
    <text evidence="4">Belongs to the peptidase M3 family.</text>
</comment>
<gene>
    <name type="primary">OCT1</name>
    <name type="ORF">Kpol_297p8</name>
</gene>
<proteinExistence type="inferred from homology"/>
<sequence>MQNKVLRGILFKNVPLGYSYNRSIRHPTFGNSIIRWASTQVKTSSDVLQRSFDDHLYWTEINKQNYSSKEGWGSITKRLKGNKLTTNRSGLFNNEYLTSPEGLKLFSQVSLEKSQKIVDKLRSDRTPEGLRLYVQNLDLLSDTLCRVIDLCEFIRSSHPDYKFVEAAQDCYEEMFEFMNMLNTDVNLCFTLKHVLENKEIASKLSEEELRVGRILLEDFEKSGIYMKPEVREQFITLSQSISVIGQEFISNTDFVKDNNVVVSCNQLDSLGIDPELLSQIEKDIAGKNYKIPTYGYIPFALLKSCPSEEIREKIWVAVHNCSNEQIKRLTDLVKLRAVLSQLLGKKSYAEYQLEGKMAKNPKEVIEFIKTLMDFTKPMAAKELDGIAEKKLTIKSNGSNLSVCDILKTVRPWDRDYYSAIEREQTSAKNLYGSEEVLKYFTLGNVMQGLSNLFQKIYGIKLELDVPKIGETWSPEVRKINVISEDEGLIGIIYCDLFERSGKTSNAAHFTICCSRDISPYETEDSTTQIAIDSKGTRFQLPIISLVCNFSKTMISETDSVCFLHLPEVETLFHEMGHAMHSMLGRTKLQNISGTRCATDFVELPSILMEYFARDPRVLETIGKHYLTKETVKREMLEPHLQDLKYLQHCETYSQAKMAMLDQTLHGETISSHLDHLDVVKLYQDLERQLGVLVDDKSNWCGKFGHLFGYSAVYYSYLFDRAIASKIWGALFERNPFSRASGDKYRNSVLQWGGSRDPWHCIASALDKPELAKGDDEAIKYIGSTNQL</sequence>
<reference key="1">
    <citation type="journal article" date="2007" name="Proc. Natl. Acad. Sci. U.S.A.">
        <title>Independent sorting-out of thousands of duplicated gene pairs in two yeast species descended from a whole-genome duplication.</title>
        <authorList>
            <person name="Scannell D.R."/>
            <person name="Frank A.C."/>
            <person name="Conant G.C."/>
            <person name="Byrne K.P."/>
            <person name="Woolfit M."/>
            <person name="Wolfe K.H."/>
        </authorList>
    </citation>
    <scope>NUCLEOTIDE SEQUENCE [LARGE SCALE GENOMIC DNA]</scope>
    <source>
        <strain>ATCC 22028 / DSM 70294 / BCRC 21397 / CBS 2163 / NBRC 10782 / NRRL Y-8283 / UCD 57-17</strain>
    </source>
</reference>
<evidence type="ECO:0000250" key="1"/>
<evidence type="ECO:0000255" key="2"/>
<evidence type="ECO:0000255" key="3">
    <source>
        <dbReference type="PROSITE-ProRule" id="PRU10095"/>
    </source>
</evidence>
<evidence type="ECO:0000305" key="4"/>
<keyword id="KW-0378">Hydrolase</keyword>
<keyword id="KW-0479">Metal-binding</keyword>
<keyword id="KW-0482">Metalloprotease</keyword>
<keyword id="KW-0496">Mitochondrion</keyword>
<keyword id="KW-0645">Protease</keyword>
<keyword id="KW-1185">Reference proteome</keyword>
<keyword id="KW-0809">Transit peptide</keyword>
<keyword id="KW-0862">Zinc</keyword>
<name>PMIP_VANPO</name>
<protein>
    <recommendedName>
        <fullName>Mitochondrial intermediate peptidase</fullName>
        <shortName>MIP</shortName>
        <ecNumber>3.4.24.59</ecNumber>
    </recommendedName>
    <alternativeName>
        <fullName>Octapeptidyl aminopeptidase</fullName>
    </alternativeName>
</protein>
<dbReference type="EC" id="3.4.24.59"/>
<dbReference type="EMBL" id="DS480515">
    <property type="protein sequence ID" value="EDO14747.1"/>
    <property type="molecule type" value="Genomic_DNA"/>
</dbReference>
<dbReference type="RefSeq" id="XP_001642605.1">
    <property type="nucleotide sequence ID" value="XM_001642555.1"/>
</dbReference>
<dbReference type="SMR" id="A7TSL2"/>
<dbReference type="FunCoup" id="A7TSL2">
    <property type="interactions" value="663"/>
</dbReference>
<dbReference type="STRING" id="436907.A7TSL2"/>
<dbReference type="MEROPS" id="M03.006"/>
<dbReference type="GeneID" id="5542774"/>
<dbReference type="KEGG" id="vpo:Kpol_297p8"/>
<dbReference type="eggNOG" id="KOG2090">
    <property type="taxonomic scope" value="Eukaryota"/>
</dbReference>
<dbReference type="HOGENOM" id="CLU_001805_0_0_1"/>
<dbReference type="InParanoid" id="A7TSL2"/>
<dbReference type="OMA" id="ALMFEYM"/>
<dbReference type="OrthoDB" id="17530at2759"/>
<dbReference type="PhylomeDB" id="A7TSL2"/>
<dbReference type="Proteomes" id="UP000000267">
    <property type="component" value="Unassembled WGS sequence"/>
</dbReference>
<dbReference type="GO" id="GO:0005759">
    <property type="term" value="C:mitochondrial matrix"/>
    <property type="evidence" value="ECO:0007669"/>
    <property type="project" value="UniProtKB-SubCell"/>
</dbReference>
<dbReference type="GO" id="GO:0046872">
    <property type="term" value="F:metal ion binding"/>
    <property type="evidence" value="ECO:0007669"/>
    <property type="project" value="UniProtKB-KW"/>
</dbReference>
<dbReference type="GO" id="GO:0004222">
    <property type="term" value="F:metalloendopeptidase activity"/>
    <property type="evidence" value="ECO:0007669"/>
    <property type="project" value="UniProtKB-EC"/>
</dbReference>
<dbReference type="GO" id="GO:0006879">
    <property type="term" value="P:intracellular iron ion homeostasis"/>
    <property type="evidence" value="ECO:0007669"/>
    <property type="project" value="EnsemblFungi"/>
</dbReference>
<dbReference type="GO" id="GO:0006518">
    <property type="term" value="P:peptide metabolic process"/>
    <property type="evidence" value="ECO:0007669"/>
    <property type="project" value="TreeGrafter"/>
</dbReference>
<dbReference type="GO" id="GO:0006627">
    <property type="term" value="P:protein processing involved in protein targeting to mitochondrion"/>
    <property type="evidence" value="ECO:0007669"/>
    <property type="project" value="EnsemblFungi"/>
</dbReference>
<dbReference type="GO" id="GO:0050821">
    <property type="term" value="P:protein stabilization"/>
    <property type="evidence" value="ECO:0007669"/>
    <property type="project" value="EnsemblFungi"/>
</dbReference>
<dbReference type="CDD" id="cd06457">
    <property type="entry name" value="M3A_MIP"/>
    <property type="match status" value="1"/>
</dbReference>
<dbReference type="FunFam" id="3.40.390.10:FF:000055">
    <property type="entry name" value="Related to mitochondrial intermediate peptidase"/>
    <property type="match status" value="1"/>
</dbReference>
<dbReference type="Gene3D" id="3.40.390.10">
    <property type="entry name" value="Collagenase (Catalytic Domain)"/>
    <property type="match status" value="1"/>
</dbReference>
<dbReference type="Gene3D" id="1.10.1370.10">
    <property type="entry name" value="Neurolysin, domain 3"/>
    <property type="match status" value="1"/>
</dbReference>
<dbReference type="InterPro" id="IPR033851">
    <property type="entry name" value="M3A_MIP"/>
</dbReference>
<dbReference type="InterPro" id="IPR024079">
    <property type="entry name" value="MetalloPept_cat_dom_sf"/>
</dbReference>
<dbReference type="InterPro" id="IPR024077">
    <property type="entry name" value="Neurolysin/TOP_dom2"/>
</dbReference>
<dbReference type="InterPro" id="IPR045090">
    <property type="entry name" value="Pept_M3A_M3B"/>
</dbReference>
<dbReference type="InterPro" id="IPR001567">
    <property type="entry name" value="Pept_M3A_M3B_dom"/>
</dbReference>
<dbReference type="PANTHER" id="PTHR11804:SF79">
    <property type="entry name" value="MITOCHONDRIAL INTERMEDIATE PEPTIDASE"/>
    <property type="match status" value="1"/>
</dbReference>
<dbReference type="PANTHER" id="PTHR11804">
    <property type="entry name" value="PROTEASE M3 THIMET OLIGOPEPTIDASE-RELATED"/>
    <property type="match status" value="1"/>
</dbReference>
<dbReference type="Pfam" id="PF01432">
    <property type="entry name" value="Peptidase_M3"/>
    <property type="match status" value="1"/>
</dbReference>
<dbReference type="SUPFAM" id="SSF55486">
    <property type="entry name" value="Metalloproteases ('zincins'), catalytic domain"/>
    <property type="match status" value="1"/>
</dbReference>
<dbReference type="PROSITE" id="PS00142">
    <property type="entry name" value="ZINC_PROTEASE"/>
    <property type="match status" value="1"/>
</dbReference>
<feature type="transit peptide" description="Mitochondrion" evidence="2">
    <location>
        <begin position="1"/>
        <end position="36"/>
    </location>
</feature>
<feature type="chain" id="PRO_0000338596" description="Mitochondrial intermediate peptidase">
    <location>
        <begin position="37"/>
        <end position="787"/>
    </location>
</feature>
<feature type="active site" evidence="3">
    <location>
        <position position="574"/>
    </location>
</feature>
<feature type="binding site" evidence="3">
    <location>
        <position position="573"/>
    </location>
    <ligand>
        <name>Zn(2+)</name>
        <dbReference type="ChEBI" id="CHEBI:29105"/>
        <note>catalytic</note>
    </ligand>
</feature>
<feature type="binding site" evidence="3">
    <location>
        <position position="577"/>
    </location>
    <ligand>
        <name>Zn(2+)</name>
        <dbReference type="ChEBI" id="CHEBI:29105"/>
        <note>catalytic</note>
    </ligand>
</feature>
<feature type="binding site" evidence="3">
    <location>
        <position position="580"/>
    </location>
    <ligand>
        <name>Zn(2+)</name>
        <dbReference type="ChEBI" id="CHEBI:29105"/>
        <note>catalytic</note>
    </ligand>
</feature>